<gene>
    <name type="primary">rpsE</name>
    <name type="ordered locus">STM3423</name>
</gene>
<name>RS5_SALTY</name>
<proteinExistence type="evidence at protein level"/>
<feature type="initiator methionine" description="Removed" evidence="1">
    <location>
        <position position="1"/>
    </location>
</feature>
<feature type="chain" id="PRO_0000131589" description="Small ribosomal subunit protein uS5">
    <location>
        <begin position="2"/>
        <end position="167"/>
    </location>
</feature>
<feature type="domain" description="S5 DRBM">
    <location>
        <begin position="11"/>
        <end position="74"/>
    </location>
</feature>
<feature type="modified residue" description="N-acetylalanine" evidence="1">
    <location>
        <position position="2"/>
    </location>
</feature>
<feature type="sequence variant" description="Confers streptomycin independence on streptomycin-dependent S12 mutant P90L.">
    <original>G</original>
    <variation>D</variation>
    <location>
        <position position="102"/>
    </location>
</feature>
<feature type="sequence variant" description="In strain: JB279; fast-growing suppressor of streptomycin resistant S12 mutant K42N.">
    <original>G</original>
    <variation>S</variation>
    <location>
        <position position="109"/>
    </location>
</feature>
<feature type="sequence variant" description="Confers streptomycin independence on streptomycin-dependent S12 mutant P90L.">
    <original>R</original>
    <variation>C</variation>
    <location>
        <position position="112"/>
    </location>
</feature>
<feature type="sequence conflict" description="In Ref. 1; CAA11205." evidence="2" ref="1">
    <original>S</original>
    <variation>L</variation>
    <location>
        <position position="92"/>
    </location>
</feature>
<feature type="sequence conflict" description="In Ref. 1; CAA11205." evidence="2" ref="1">
    <original>F</original>
    <variation>I</variation>
    <location>
        <position position="95"/>
    </location>
</feature>
<protein>
    <recommendedName>
        <fullName evidence="2">Small ribosomal subunit protein uS5</fullName>
    </recommendedName>
    <alternativeName>
        <fullName>30S ribosomal protein S5</fullName>
    </alternativeName>
</protein>
<organism>
    <name type="scientific">Salmonella typhimurium (strain LT2 / SGSC1412 / ATCC 700720)</name>
    <dbReference type="NCBI Taxonomy" id="99287"/>
    <lineage>
        <taxon>Bacteria</taxon>
        <taxon>Pseudomonadati</taxon>
        <taxon>Pseudomonadota</taxon>
        <taxon>Gammaproteobacteria</taxon>
        <taxon>Enterobacterales</taxon>
        <taxon>Enterobacteriaceae</taxon>
        <taxon>Salmonella</taxon>
    </lineage>
</organism>
<comment type="function">
    <text>With S4 and S12 plays an important role in translational accuracy. Many suppressors of streptomycin-dependent mutants of protein S12 are found in this protein, some but not all of which decrease translational accuracy (ram, ribosomal ambiguity mutations).</text>
</comment>
<comment type="function">
    <text>Located at the back of the 30S subunit body where it stabilizes the conformation of the head with respect to the body.</text>
</comment>
<comment type="subunit">
    <text>Part of the 30S ribosomal subunit. Contacts proteins S4 and S8.</text>
</comment>
<comment type="domain">
    <text>The N-terminal domain interacts with the head of the 30S subunit; the C-terminal domain interacts with the body and contacts protein S4. The interaction surface between S4 and S5 is involved in control of translational fidelity.</text>
</comment>
<comment type="miscellaneous">
    <text>Altered S5 proteins have been identified in a number of mutants. Some mutations in S5 have been shown to increase translational error frequencies.</text>
</comment>
<comment type="similarity">
    <text evidence="2">Belongs to the universal ribosomal protein uS5 family.</text>
</comment>
<sequence>MAHIEKQAGELQEKLIAVNRVSKTVKGGRIFSFTALTVVGDGNGRVGFGYGKAREVPAAIQKAMEKARRNMINVALNNGTLQHPVKGVHTGSRVFMQPASEGTGIIAGGAMRAVLEVAGVHNVLAKAYGSTNPINVVRATIDGLENMNSPEMVAAKRGKSVEEILGK</sequence>
<dbReference type="EMBL" id="AJ223237">
    <property type="protein sequence ID" value="CAA11205.1"/>
    <property type="molecule type" value="Genomic_DNA"/>
</dbReference>
<dbReference type="EMBL" id="AE006468">
    <property type="protein sequence ID" value="AAL22286.1"/>
    <property type="molecule type" value="Genomic_DNA"/>
</dbReference>
<dbReference type="RefSeq" id="NP_462327.1">
    <property type="nucleotide sequence ID" value="NC_003197.2"/>
</dbReference>
<dbReference type="RefSeq" id="WP_000940121.1">
    <property type="nucleotide sequence ID" value="NC_003197.2"/>
</dbReference>
<dbReference type="SMR" id="P0A7W4"/>
<dbReference type="STRING" id="99287.STM3423"/>
<dbReference type="PaxDb" id="99287-STM3423"/>
<dbReference type="GeneID" id="1254946"/>
<dbReference type="GeneID" id="93778684"/>
<dbReference type="KEGG" id="stm:STM3423"/>
<dbReference type="PATRIC" id="fig|99287.12.peg.3620"/>
<dbReference type="HOGENOM" id="CLU_065898_2_2_6"/>
<dbReference type="OMA" id="GIKDVWT"/>
<dbReference type="PhylomeDB" id="P0A7W4"/>
<dbReference type="BioCyc" id="SENT99287:STM3423-MONOMER"/>
<dbReference type="Proteomes" id="UP000001014">
    <property type="component" value="Chromosome"/>
</dbReference>
<dbReference type="GO" id="GO:0022627">
    <property type="term" value="C:cytosolic small ribosomal subunit"/>
    <property type="evidence" value="ECO:0000318"/>
    <property type="project" value="GO_Central"/>
</dbReference>
<dbReference type="GO" id="GO:0019843">
    <property type="term" value="F:rRNA binding"/>
    <property type="evidence" value="ECO:0007669"/>
    <property type="project" value="UniProtKB-UniRule"/>
</dbReference>
<dbReference type="GO" id="GO:0003735">
    <property type="term" value="F:structural constituent of ribosome"/>
    <property type="evidence" value="ECO:0000318"/>
    <property type="project" value="GO_Central"/>
</dbReference>
<dbReference type="GO" id="GO:0046677">
    <property type="term" value="P:response to antibiotic"/>
    <property type="evidence" value="ECO:0007669"/>
    <property type="project" value="UniProtKB-KW"/>
</dbReference>
<dbReference type="GO" id="GO:0006412">
    <property type="term" value="P:translation"/>
    <property type="evidence" value="ECO:0000318"/>
    <property type="project" value="GO_Central"/>
</dbReference>
<dbReference type="FunFam" id="3.30.160.20:FF:000001">
    <property type="entry name" value="30S ribosomal protein S5"/>
    <property type="match status" value="1"/>
</dbReference>
<dbReference type="FunFam" id="3.30.230.10:FF:000002">
    <property type="entry name" value="30S ribosomal protein S5"/>
    <property type="match status" value="1"/>
</dbReference>
<dbReference type="Gene3D" id="3.30.160.20">
    <property type="match status" value="1"/>
</dbReference>
<dbReference type="Gene3D" id="3.30.230.10">
    <property type="match status" value="1"/>
</dbReference>
<dbReference type="HAMAP" id="MF_01307_B">
    <property type="entry name" value="Ribosomal_uS5_B"/>
    <property type="match status" value="1"/>
</dbReference>
<dbReference type="InterPro" id="IPR020568">
    <property type="entry name" value="Ribosomal_Su5_D2-typ_SF"/>
</dbReference>
<dbReference type="InterPro" id="IPR000851">
    <property type="entry name" value="Ribosomal_uS5"/>
</dbReference>
<dbReference type="InterPro" id="IPR005712">
    <property type="entry name" value="Ribosomal_uS5_bac-type"/>
</dbReference>
<dbReference type="InterPro" id="IPR005324">
    <property type="entry name" value="Ribosomal_uS5_C"/>
</dbReference>
<dbReference type="InterPro" id="IPR013810">
    <property type="entry name" value="Ribosomal_uS5_N"/>
</dbReference>
<dbReference type="InterPro" id="IPR018192">
    <property type="entry name" value="Ribosomal_uS5_N_CS"/>
</dbReference>
<dbReference type="InterPro" id="IPR014721">
    <property type="entry name" value="Ribsml_uS5_D2-typ_fold_subgr"/>
</dbReference>
<dbReference type="NCBIfam" id="TIGR01021">
    <property type="entry name" value="rpsE_bact"/>
    <property type="match status" value="1"/>
</dbReference>
<dbReference type="PANTHER" id="PTHR48277">
    <property type="entry name" value="MITOCHONDRIAL RIBOSOMAL PROTEIN S5"/>
    <property type="match status" value="1"/>
</dbReference>
<dbReference type="PANTHER" id="PTHR48277:SF1">
    <property type="entry name" value="MITOCHONDRIAL RIBOSOMAL PROTEIN S5"/>
    <property type="match status" value="1"/>
</dbReference>
<dbReference type="Pfam" id="PF00333">
    <property type="entry name" value="Ribosomal_S5"/>
    <property type="match status" value="1"/>
</dbReference>
<dbReference type="Pfam" id="PF03719">
    <property type="entry name" value="Ribosomal_S5_C"/>
    <property type="match status" value="1"/>
</dbReference>
<dbReference type="SUPFAM" id="SSF54768">
    <property type="entry name" value="dsRNA-binding domain-like"/>
    <property type="match status" value="1"/>
</dbReference>
<dbReference type="SUPFAM" id="SSF54211">
    <property type="entry name" value="Ribosomal protein S5 domain 2-like"/>
    <property type="match status" value="1"/>
</dbReference>
<dbReference type="PROSITE" id="PS00585">
    <property type="entry name" value="RIBOSOMAL_S5"/>
    <property type="match status" value="1"/>
</dbReference>
<dbReference type="PROSITE" id="PS50881">
    <property type="entry name" value="S5_DSRBD"/>
    <property type="match status" value="1"/>
</dbReference>
<keyword id="KW-0007">Acetylation</keyword>
<keyword id="KW-0046">Antibiotic resistance</keyword>
<keyword id="KW-1185">Reference proteome</keyword>
<keyword id="KW-0687">Ribonucleoprotein</keyword>
<keyword id="KW-0689">Ribosomal protein</keyword>
<keyword id="KW-0694">RNA-binding</keyword>
<keyword id="KW-0699">rRNA-binding</keyword>
<evidence type="ECO:0000250" key="1"/>
<evidence type="ECO:0000305" key="2"/>
<accession>P0A7W4</accession>
<accession>O54299</accession>
<accession>P02356</accession>
<reference key="1">
    <citation type="journal article" date="1998" name="Proc. Natl. Acad. Sci. U.S.A.">
        <title>Virulence of antibiotic-resistant Salmonella typhimurium.</title>
        <authorList>
            <person name="Bjoerkman J."/>
            <person name="Hughes D."/>
            <person name="Andersson D.I."/>
        </authorList>
    </citation>
    <scope>NUCLEOTIDE SEQUENCE [GENOMIC DNA]</scope>
    <scope>VARIANTS</scope>
    <source>
        <strain>LT2</strain>
    </source>
</reference>
<reference key="2">
    <citation type="journal article" date="2001" name="Nature">
        <title>Complete genome sequence of Salmonella enterica serovar Typhimurium LT2.</title>
        <authorList>
            <person name="McClelland M."/>
            <person name="Sanderson K.E."/>
            <person name="Spieth J."/>
            <person name="Clifton S.W."/>
            <person name="Latreille P."/>
            <person name="Courtney L."/>
            <person name="Porwollik S."/>
            <person name="Ali J."/>
            <person name="Dante M."/>
            <person name="Du F."/>
            <person name="Hou S."/>
            <person name="Layman D."/>
            <person name="Leonard S."/>
            <person name="Nguyen C."/>
            <person name="Scott K."/>
            <person name="Holmes A."/>
            <person name="Grewal N."/>
            <person name="Mulvaney E."/>
            <person name="Ryan E."/>
            <person name="Sun H."/>
            <person name="Florea L."/>
            <person name="Miller W."/>
            <person name="Stoneking T."/>
            <person name="Nhan M."/>
            <person name="Waterston R."/>
            <person name="Wilson R.K."/>
        </authorList>
    </citation>
    <scope>NUCLEOTIDE SEQUENCE [LARGE SCALE GENOMIC DNA]</scope>
    <source>
        <strain>LT2 / SGSC1412 / ATCC 700720</strain>
    </source>
</reference>
<reference key="3">
    <citation type="journal article" date="1999" name="Mol. Microbiol.">
        <title>Novel ribosomal mutations affecting translational accuracy, antibiotic resistance and virulence of Salmonella typhimurium.</title>
        <authorList>
            <person name="Bjoerkman J."/>
            <person name="Samuelsson P."/>
            <person name="Andersson D.I."/>
            <person name="Hughes D."/>
        </authorList>
    </citation>
    <scope>CHARACTERIZATION OF VARIANTS</scope>
    <source>
        <strain>LT2</strain>
    </source>
</reference>
<reference key="4">
    <citation type="book" date="1996" name="Escherichia coli and Salmonella: Cellular and molecular biology (2nd ed.)">
        <title>Limitations of translational accuracy.</title>
        <editorList>
            <person name="Neidhardt F.C."/>
            <person name="Curtiss R. III"/>
            <person name="Ingraham J.L."/>
            <person name="Lin E.C.C."/>
            <person name="Low K.B. Magasanik B."/>
            <person name="Reznikoff W.S."/>
            <person name="Riley M."/>
            <person name="Schaechter M."/>
            <person name="Umbarger H.E."/>
        </editorList>
        <authorList>
            <person name="Kurland C.G."/>
            <person name="Hughes D."/>
            <person name="Ehrenberg M."/>
        </authorList>
    </citation>
    <scope>REVIEW ON TRANSLATIONAL ACCURACY</scope>
</reference>